<sequence length="526" mass="59163">MGKIIKSLSRFGKKVGNALTSNTAKKIYSTIGKAAERFAESEIGAATIDGLVQGSVHSIITGESYGESVKQAVLLNVLGTGEELPDPLSPGERGMQTKIKELEDEQRNELVRLKYNKEITEKFGKELGEVYDFMNGEAKEVEAVEEQYTMLCKAVDSYEKILKEEDSKMAILARALQREAAERSEDEIKMVKEYRQKIDALKSAIEIERDGMQEEAIQEIAGMTADVLEAASEEVPLIGAGMATAVATGRAIEGAYKLKKVINALSGIDLSHMRSPKIEPTIIATTLEHRFKDIPDEQLAISVLNKKTAVADNCNEIAHIKQEILPKFKQIMNEEKEIEGIEDKVIHPRVMMRFKIPRTQQPQIHIYAAPWDSDDVFFFHCVSYHHRNESFFLGFDLGIDVVHFEDLTSHWHALGMAQEASGRTLTEAYREFLNLSISSTFSSAIHARRMIRSRAVHPIFLGSMHYDITYEALKNNAQRIVYDDELQMHILRGPLHFQRRAILGALKFGVKILGDKIDVPLFLRNA</sequence>
<reference key="1">
    <citation type="journal article" date="1986" name="J. Gen. Virol.">
        <title>Nucleotide sequence of cDNA clones encoding the outer capsid protein, VP5, of bluetongue virus serotype 10.</title>
        <authorList>
            <person name="Purdy M.A."/>
            <person name="Ritter G.D."/>
            <person name="Roy P."/>
        </authorList>
    </citation>
    <scope>NUCLEOTIDE SEQUENCE [GENOMIC RNA]</scope>
</reference>
<reference key="2">
    <citation type="journal article" date="2004" name="Proc. Natl. Acad. Sci. U.S.A.">
        <title>A capsid protein of nonenveloped Bluetongue virus exhibits membrane Permeabilization activity.</title>
        <authorList>
            <person name="Forzan M."/>
            <person name="Wirblich C."/>
            <person name="Roy P."/>
        </authorList>
    </citation>
    <scope>FUNCTION</scope>
</reference>
<comment type="function">
    <text evidence="1">VP5 protein is one of the two proteins (with VP2) which constitute the virus particle outer capsid. Acts as a membrane permeabilization protein that mediates release of viral particles from endosomal compartments into the cytoplasm. Permeabilization activity is probably negatively regulated by VP2 and is triggered by endosomal degradation of VP2 and exposure to low pH.</text>
</comment>
<comment type="subcellular location">
    <subcellularLocation>
        <location evidence="2">Virion</location>
    </subcellularLocation>
</comment>
<comment type="similarity">
    <text evidence="2">Belongs to the orbivirus VP5 family.</text>
</comment>
<protein>
    <recommendedName>
        <fullName>Outer capsid protein VP5</fullName>
    </recommendedName>
</protein>
<feature type="chain" id="PRO_0000222712" description="Outer capsid protein VP5">
    <location>
        <begin position="1"/>
        <end position="526"/>
    </location>
</feature>
<feature type="region of interest" description="Involved in membrane permeabilization">
    <location>
        <begin position="1"/>
        <end position="42"/>
    </location>
</feature>
<proteinExistence type="inferred from homology"/>
<dbReference type="EMBL" id="D12532">
    <property type="protein sequence ID" value="BAA02095.1"/>
    <property type="molecule type" value="Genomic_RNA"/>
</dbReference>
<dbReference type="PIR" id="A25419">
    <property type="entry name" value="P5XR10"/>
</dbReference>
<dbReference type="RefSeq" id="YP_052955.1">
    <property type="nucleotide sequence ID" value="NC_006010.1"/>
</dbReference>
<dbReference type="SMR" id="P07389"/>
<dbReference type="KEGG" id="vg:2943151"/>
<dbReference type="Proteomes" id="UP000007662">
    <property type="component" value="Genome"/>
</dbReference>
<dbReference type="GO" id="GO:0039624">
    <property type="term" value="C:viral outer capsid"/>
    <property type="evidence" value="ECO:0007669"/>
    <property type="project" value="UniProtKB-KW"/>
</dbReference>
<dbReference type="GO" id="GO:0005198">
    <property type="term" value="F:structural molecule activity"/>
    <property type="evidence" value="ECO:0007669"/>
    <property type="project" value="InterPro"/>
</dbReference>
<dbReference type="GO" id="GO:0140267">
    <property type="term" value="P:symbiont entry into host cell via permeabilization of host membrane"/>
    <property type="evidence" value="ECO:0007669"/>
    <property type="project" value="UniProtKB-KW"/>
</dbReference>
<dbReference type="InterPro" id="IPR000145">
    <property type="entry name" value="Capsid_VP5_Orbivir"/>
</dbReference>
<dbReference type="Pfam" id="PF00901">
    <property type="entry name" value="Orbi_VP5"/>
    <property type="match status" value="1"/>
</dbReference>
<organismHost>
    <name type="scientific">Antilocapra americana</name>
    <name type="common">Pronghorn</name>
    <dbReference type="NCBI Taxonomy" id="9891"/>
</organismHost>
<organismHost>
    <name type="scientific">Bos taurus</name>
    <name type="common">Bovine</name>
    <dbReference type="NCBI Taxonomy" id="9913"/>
</organismHost>
<organismHost>
    <name type="scientific">Capra hircus</name>
    <name type="common">Goat</name>
    <dbReference type="NCBI Taxonomy" id="9925"/>
</organismHost>
<organismHost>
    <name type="scientific">Culicoides variipennis</name>
    <name type="common">Biting midge</name>
    <dbReference type="NCBI Taxonomy" id="46212"/>
</organismHost>
<organismHost>
    <name type="scientific">Ovis aries</name>
    <name type="common">Sheep</name>
    <dbReference type="NCBI Taxonomy" id="9940"/>
</organismHost>
<gene>
    <name type="primary">Segment-6</name>
    <name type="synonym">M5</name>
</gene>
<accession>P07389</accession>
<keyword id="KW-0167">Capsid protein</keyword>
<keyword id="KW-1152">Outer capsid protein</keyword>
<keyword id="KW-1185">Reference proteome</keyword>
<keyword id="KW-1162">Viral penetration into host cytoplasm</keyword>
<keyword id="KW-1173">Viral penetration via permeabilization of host membrane</keyword>
<keyword id="KW-0946">Virion</keyword>
<keyword id="KW-1160">Virus entry into host cell</keyword>
<evidence type="ECO:0000269" key="1">
    <source>
    </source>
</evidence>
<evidence type="ECO:0000305" key="2"/>
<name>VP5_BTV10</name>
<organism>
    <name type="scientific">Bluetongue virus 10 (isolate USA)</name>
    <name type="common">BTV 10</name>
    <dbReference type="NCBI Taxonomy" id="10900"/>
    <lineage>
        <taxon>Viruses</taxon>
        <taxon>Riboviria</taxon>
        <taxon>Orthornavirae</taxon>
        <taxon>Duplornaviricota</taxon>
        <taxon>Resentoviricetes</taxon>
        <taxon>Reovirales</taxon>
        <taxon>Sedoreoviridae</taxon>
        <taxon>Orbivirus</taxon>
        <taxon>Bluetongue virus</taxon>
    </lineage>
</organism>